<feature type="chain" id="PRO_0000194363" description="Adenine deaminase">
    <location>
        <begin position="1"/>
        <end position="317"/>
    </location>
</feature>
<feature type="active site" description="Proton donor" evidence="1">
    <location>
        <position position="197"/>
    </location>
</feature>
<feature type="binding site" evidence="1">
    <location>
        <position position="14"/>
    </location>
    <ligand>
        <name>Zn(2+)</name>
        <dbReference type="ChEBI" id="CHEBI:29105"/>
        <note>catalytic</note>
    </ligand>
</feature>
<feature type="binding site" evidence="1">
    <location>
        <position position="16"/>
    </location>
    <ligand>
        <name>Zn(2+)</name>
        <dbReference type="ChEBI" id="CHEBI:29105"/>
        <note>catalytic</note>
    </ligand>
</feature>
<feature type="binding site" evidence="1">
    <location>
        <position position="194"/>
    </location>
    <ligand>
        <name>Zn(2+)</name>
        <dbReference type="ChEBI" id="CHEBI:29105"/>
        <note>catalytic</note>
    </ligand>
</feature>
<feature type="binding site" evidence="1">
    <location>
        <position position="275"/>
    </location>
    <ligand>
        <name>Zn(2+)</name>
        <dbReference type="ChEBI" id="CHEBI:29105"/>
        <note>catalytic</note>
    </ligand>
</feature>
<feature type="binding site" evidence="1">
    <location>
        <position position="276"/>
    </location>
    <ligand>
        <name>substrate</name>
    </ligand>
</feature>
<feature type="site" description="Important for catalytic activity" evidence="1">
    <location>
        <position position="218"/>
    </location>
</feature>
<evidence type="ECO:0000255" key="1">
    <source>
        <dbReference type="HAMAP-Rule" id="MF_01962"/>
    </source>
</evidence>
<reference key="1">
    <citation type="journal article" date="2003" name="Nat. Genet.">
        <title>Comparative analysis of the genome sequences of Bordetella pertussis, Bordetella parapertussis and Bordetella bronchiseptica.</title>
        <authorList>
            <person name="Parkhill J."/>
            <person name="Sebaihia M."/>
            <person name="Preston A."/>
            <person name="Murphy L.D."/>
            <person name="Thomson N.R."/>
            <person name="Harris D.E."/>
            <person name="Holden M.T.G."/>
            <person name="Churcher C.M."/>
            <person name="Bentley S.D."/>
            <person name="Mungall K.L."/>
            <person name="Cerdeno-Tarraga A.-M."/>
            <person name="Temple L."/>
            <person name="James K.D."/>
            <person name="Harris B."/>
            <person name="Quail M.A."/>
            <person name="Achtman M."/>
            <person name="Atkin R."/>
            <person name="Baker S."/>
            <person name="Basham D."/>
            <person name="Bason N."/>
            <person name="Cherevach I."/>
            <person name="Chillingworth T."/>
            <person name="Collins M."/>
            <person name="Cronin A."/>
            <person name="Davis P."/>
            <person name="Doggett J."/>
            <person name="Feltwell T."/>
            <person name="Goble A."/>
            <person name="Hamlin N."/>
            <person name="Hauser H."/>
            <person name="Holroyd S."/>
            <person name="Jagels K."/>
            <person name="Leather S."/>
            <person name="Moule S."/>
            <person name="Norberczak H."/>
            <person name="O'Neil S."/>
            <person name="Ormond D."/>
            <person name="Price C."/>
            <person name="Rabbinowitsch E."/>
            <person name="Rutter S."/>
            <person name="Sanders M."/>
            <person name="Saunders D."/>
            <person name="Seeger K."/>
            <person name="Sharp S."/>
            <person name="Simmonds M."/>
            <person name="Skelton J."/>
            <person name="Squares R."/>
            <person name="Squares S."/>
            <person name="Stevens K."/>
            <person name="Unwin L."/>
            <person name="Whitehead S."/>
            <person name="Barrell B.G."/>
            <person name="Maskell D.J."/>
        </authorList>
    </citation>
    <scope>NUCLEOTIDE SEQUENCE [LARGE SCALE GENOMIC DNA]</scope>
    <source>
        <strain>12822 / ATCC BAA-587 / NCTC 13253</strain>
    </source>
</reference>
<name>ADE_BORPA</name>
<protein>
    <recommendedName>
        <fullName evidence="1">Adenine deaminase</fullName>
        <shortName evidence="1">ADE</shortName>
        <ecNumber evidence="1">3.5.4.2</ecNumber>
    </recommendedName>
    <alternativeName>
        <fullName evidence="1">Adenine aminohydrolase</fullName>
        <shortName evidence="1">AAH</shortName>
    </alternativeName>
</protein>
<proteinExistence type="inferred from homology"/>
<dbReference type="EC" id="3.5.4.2" evidence="1"/>
<dbReference type="EMBL" id="BX640426">
    <property type="protein sequence ID" value="CAE36339.1"/>
    <property type="molecule type" value="Genomic_DNA"/>
</dbReference>
<dbReference type="RefSeq" id="WP_010926108.1">
    <property type="nucleotide sequence ID" value="NC_002928.3"/>
</dbReference>
<dbReference type="SMR" id="Q7WBG5"/>
<dbReference type="DNASU" id="1666380"/>
<dbReference type="KEGG" id="bpa:BPP1038"/>
<dbReference type="HOGENOM" id="CLU_039228_7_0_4"/>
<dbReference type="Proteomes" id="UP000001421">
    <property type="component" value="Chromosome"/>
</dbReference>
<dbReference type="GO" id="GO:0005829">
    <property type="term" value="C:cytosol"/>
    <property type="evidence" value="ECO:0007669"/>
    <property type="project" value="TreeGrafter"/>
</dbReference>
<dbReference type="GO" id="GO:0000034">
    <property type="term" value="F:adenine deaminase activity"/>
    <property type="evidence" value="ECO:0007669"/>
    <property type="project" value="UniProtKB-UniRule"/>
</dbReference>
<dbReference type="GO" id="GO:0008270">
    <property type="term" value="F:zinc ion binding"/>
    <property type="evidence" value="ECO:0007669"/>
    <property type="project" value="UniProtKB-UniRule"/>
</dbReference>
<dbReference type="GO" id="GO:0006146">
    <property type="term" value="P:adenine catabolic process"/>
    <property type="evidence" value="ECO:0007669"/>
    <property type="project" value="UniProtKB-UniRule"/>
</dbReference>
<dbReference type="GO" id="GO:0043103">
    <property type="term" value="P:hypoxanthine salvage"/>
    <property type="evidence" value="ECO:0007669"/>
    <property type="project" value="UniProtKB-UniRule"/>
</dbReference>
<dbReference type="GO" id="GO:0009117">
    <property type="term" value="P:nucleotide metabolic process"/>
    <property type="evidence" value="ECO:0007669"/>
    <property type="project" value="UniProtKB-KW"/>
</dbReference>
<dbReference type="CDD" id="cd01320">
    <property type="entry name" value="ADA"/>
    <property type="match status" value="1"/>
</dbReference>
<dbReference type="FunFam" id="3.20.20.140:FF:000039">
    <property type="entry name" value="Adenine deaminase"/>
    <property type="match status" value="1"/>
</dbReference>
<dbReference type="Gene3D" id="3.20.20.140">
    <property type="entry name" value="Metal-dependent hydrolases"/>
    <property type="match status" value="1"/>
</dbReference>
<dbReference type="HAMAP" id="MF_01962">
    <property type="entry name" value="Adenine_deaminase"/>
    <property type="match status" value="1"/>
</dbReference>
<dbReference type="InterPro" id="IPR001365">
    <property type="entry name" value="A_deaminase_dom"/>
</dbReference>
<dbReference type="InterPro" id="IPR028892">
    <property type="entry name" value="ADE"/>
</dbReference>
<dbReference type="InterPro" id="IPR006330">
    <property type="entry name" value="Ado/ade_deaminase"/>
</dbReference>
<dbReference type="InterPro" id="IPR032466">
    <property type="entry name" value="Metal_Hydrolase"/>
</dbReference>
<dbReference type="NCBIfam" id="TIGR01430">
    <property type="entry name" value="aden_deam"/>
    <property type="match status" value="1"/>
</dbReference>
<dbReference type="NCBIfam" id="NF006850">
    <property type="entry name" value="PRK09358.1-6"/>
    <property type="match status" value="1"/>
</dbReference>
<dbReference type="PANTHER" id="PTHR43114">
    <property type="entry name" value="ADENINE DEAMINASE"/>
    <property type="match status" value="1"/>
</dbReference>
<dbReference type="PANTHER" id="PTHR43114:SF6">
    <property type="entry name" value="ADENINE DEAMINASE"/>
    <property type="match status" value="1"/>
</dbReference>
<dbReference type="Pfam" id="PF00962">
    <property type="entry name" value="A_deaminase"/>
    <property type="match status" value="1"/>
</dbReference>
<dbReference type="SUPFAM" id="SSF51556">
    <property type="entry name" value="Metallo-dependent hydrolases"/>
    <property type="match status" value="1"/>
</dbReference>
<accession>Q7WBG5</accession>
<organism>
    <name type="scientific">Bordetella parapertussis (strain 12822 / ATCC BAA-587 / NCTC 13253)</name>
    <dbReference type="NCBI Taxonomy" id="257311"/>
    <lineage>
        <taxon>Bacteria</taxon>
        <taxon>Pseudomonadati</taxon>
        <taxon>Pseudomonadota</taxon>
        <taxon>Betaproteobacteria</taxon>
        <taxon>Burkholderiales</taxon>
        <taxon>Alcaligenaceae</taxon>
        <taxon>Bordetella</taxon>
    </lineage>
</organism>
<keyword id="KW-0378">Hydrolase</keyword>
<keyword id="KW-0479">Metal-binding</keyword>
<keyword id="KW-0546">Nucleotide metabolism</keyword>
<keyword id="KW-0862">Zinc</keyword>
<sequence length="317" mass="36053">MYDWLNALPKAELHLHLEGTLEPGLMFELARRNGVALPWPDVESLRRAYDYDNLQEFLDLYYRGAEVLRTEQDFYDLTWAYLLKCREQNVVHTEPFFDPQTHTDRGIAFETVLAGITQALEDGRTQLGIQGGLILSFLRHLPEEAAMRTLEQALPYRDAFIAVGLDSSERGFPPRLFQRVFERARAAGLPAVAHAGEEGPPEYIWEALDLLQVRRIDHGVRAAEDERLIERLIDTQIPLTVCPLSNTRLRVFDSMAEHNILELLERGVKVTVNSDDPAYFGGYITENFHALHEHLGMTQDQARRLAANSMDARLAGG</sequence>
<gene>
    <name type="ordered locus">BPP1038</name>
</gene>
<comment type="function">
    <text evidence="1">Catalyzes the hydrolytic deamination of adenine to hypoxanthine. Plays an important role in the purine salvage pathway and in nitrogen catabolism.</text>
</comment>
<comment type="catalytic activity">
    <reaction evidence="1">
        <text>adenine + H2O + H(+) = hypoxanthine + NH4(+)</text>
        <dbReference type="Rhea" id="RHEA:23688"/>
        <dbReference type="ChEBI" id="CHEBI:15377"/>
        <dbReference type="ChEBI" id="CHEBI:15378"/>
        <dbReference type="ChEBI" id="CHEBI:16708"/>
        <dbReference type="ChEBI" id="CHEBI:17368"/>
        <dbReference type="ChEBI" id="CHEBI:28938"/>
        <dbReference type="EC" id="3.5.4.2"/>
    </reaction>
</comment>
<comment type="cofactor">
    <cofactor evidence="1">
        <name>Zn(2+)</name>
        <dbReference type="ChEBI" id="CHEBI:29105"/>
    </cofactor>
    <text evidence="1">Binds 1 zinc ion per subunit.</text>
</comment>
<comment type="similarity">
    <text evidence="1">Belongs to the metallo-dependent hydrolases superfamily. Adenosine and AMP deaminases family. Adenine deaminase type 2 subfamily.</text>
</comment>